<comment type="function">
    <text evidence="1">Ubiquitin exists either covalently attached to another protein, or free (unanchored). When covalently bound, it is conjugated to target proteins via an isopeptide bond either as a monomer (monoubiquitin), a polymer linked via different Lys residues of the ubiquitin (polyubiquitin chains) or a linear polymer linked via the initiator Met of the ubiquitin (linear polyubiquitin chains). Polyubiquitin chains, when attached to a target protein, have different functions depending on the Lys residue of the ubiquitin that is linked: Lys-48-linked is involved in protein degradation via the proteasome. Linear polymer chains formed via attachment by the initiator Met lead to cell signaling. Ubiquitin is usually conjugated to Lys residues of target proteins, however, in rare cases, conjugation to Cys or Ser residues has been observed. When polyubiquitin is free (unanchored-polyubiquitin), it also has distinct roles, such as in activation of protein kinases, and in signaling (By similarity).</text>
</comment>
<comment type="subcellular location">
    <molecule>Ubiquitin</molecule>
    <subcellularLocation>
        <location evidence="1">Cytoplasm</location>
    </subcellularLocation>
    <subcellularLocation>
        <location evidence="1">Nucleus</location>
    </subcellularLocation>
</comment>
<comment type="miscellaneous">
    <text>In C.elegans ubiquitin is encoded by 2 different genes. ubq-2 gene codes for a single copy of ubiquitin fused to the ribosomal proteins eL40. ubq-1 gene codes for a polyubiquitin precursor with exact head to tail repeats.</text>
</comment>
<comment type="miscellaneous">
    <text>For the sake of clarity sequence features are annotated only for the first chain, and are not repeated for each of the following chains.</text>
</comment>
<comment type="similarity">
    <text evidence="3">Belongs to the ubiquitin family.</text>
</comment>
<evidence type="ECO:0000250" key="1"/>
<evidence type="ECO:0000255" key="2">
    <source>
        <dbReference type="PROSITE-ProRule" id="PRU00214"/>
    </source>
</evidence>
<evidence type="ECO:0000305" key="3"/>
<keyword id="KW-0963">Cytoplasm</keyword>
<keyword id="KW-1017">Isopeptide bond</keyword>
<keyword id="KW-0539">Nucleus</keyword>
<keyword id="KW-1185">Reference proteome</keyword>
<keyword id="KW-0677">Repeat</keyword>
<keyword id="KW-0832">Ubl conjugation</keyword>
<reference key="1">
    <citation type="journal article" date="1989" name="Mol. Cell. Biol.">
        <title>UbiA, the major polyubiquitin locus in Caenorhabditis elegans, has unusual structural features and is constitutively expressed.</title>
        <authorList>
            <person name="Graham R.W."/>
            <person name="Jones D."/>
            <person name="Candidio E.P.M."/>
        </authorList>
    </citation>
    <scope>NUCLEOTIDE SEQUENCE [GENOMIC DNA]</scope>
</reference>
<reference key="2">
    <citation type="journal article" date="1998" name="Science">
        <title>Genome sequence of the nematode C. elegans: a platform for investigating biology.</title>
        <authorList>
            <consortium name="The C. elegans sequencing consortium"/>
        </authorList>
    </citation>
    <scope>NUCLEOTIDE SEQUENCE [LARGE SCALE GENOMIC DNA]</scope>
    <source>
        <strain>Bristol N2</strain>
    </source>
</reference>
<reference key="3">
    <citation type="journal article" date="1988" name="J. Biol. Chem.">
        <title>Maturation of the major ubiquitin gene transcript in Caenorhabditis elegans involves the acquisition of a trans-spliced leader.</title>
        <authorList>
            <person name="Graham R.W."/>
            <person name="van Doren K."/>
            <person name="Bektesh S."/>
            <person name="Candido E.P.M."/>
        </authorList>
    </citation>
    <scope>NUCLEOTIDE SEQUENCE [GENOMIC DNA] OF 1-37</scope>
</reference>
<name>UBIQ1_CAEEL</name>
<accession>P0CG71</accession>
<accession>P14792</accession>
<accession>Q9U1P3</accession>
<organism>
    <name type="scientific">Caenorhabditis elegans</name>
    <dbReference type="NCBI Taxonomy" id="6239"/>
    <lineage>
        <taxon>Eukaryota</taxon>
        <taxon>Metazoa</taxon>
        <taxon>Ecdysozoa</taxon>
        <taxon>Nematoda</taxon>
        <taxon>Chromadorea</taxon>
        <taxon>Rhabditida</taxon>
        <taxon>Rhabditina</taxon>
        <taxon>Rhabditomorpha</taxon>
        <taxon>Rhabditoidea</taxon>
        <taxon>Rhabditidae</taxon>
        <taxon>Peloderinae</taxon>
        <taxon>Caenorhabditis</taxon>
    </lineage>
</organism>
<gene>
    <name type="primary">ubq-1</name>
    <name type="synonym">ubia</name>
    <name type="ORF">F25B5.4</name>
</gene>
<proteinExistence type="inferred from homology"/>
<sequence length="838" mass="93987">MQIFVKTLTGKTITLEVEASDTIENVKAKIQDKEGIPPDQQRLIFAGKQLEDGRTLSDYNIQKESTLHLVLRLRGGMQIFVKTLTGKTITLEVEASDTIENVKAKIQDKEGIPPDQQRLIFAGKQLEDGRTLSDYNIQKESTLHLVLRLRGGMQIFVKTLTGKTITLEVEASDTIENVKAKIQDKEGIPPDQQRLIFAGKQLEDGRTLSDYNIQKESTLHLVLRLRGGMQIFVKTLTGKTITLEVEASDTIENVKAKIQDKEGIPPDQQRLIFAGKQLEDGRTLSDYNIQKESTLHLVLRLRGGMQIFVKTLTGKTITLEVEASDTIENVKAKIQDKEGIPPDQQRLIFAGKQLEDGRTLSDYNIQKESTLHLVLRLRGGMQIFVKTLIGKTITLEVEASDTIENVKAKIQDKEGIPPDQQRLIFAGKQLEDGRTLSDYNIQKESTLHLVLRLRGGMQIFVKTLTGKTITLEVEASDTIENVKAKIQDKEGIPPDQQRLIFAGKQLEDGRTLSDYNIQKESTLHLVLRLRGGMQIFVKTLTGKTITLEVEASDTIENVKAKIQDKEGIPPDQQRLIFAGKQLEDGRTLSDYNIQKESTLHLVLRLRGGMQIFVKTLTGKTITLEVEASDTIENVKAKIQDKEGIPPDQQRLIFAGKQLEDGRTLSDYNIQKESTLHLVLRLRGGMQIFVKTLTGKTITLEVEASDTIENVKAKIQDKEGIPPDQQRLIFAGKQLEDGRTLSDYNIQKESTLHLVLRLRGGMQIFVKTLTGKTITLEVEASDTIENVKAKIQDKEGIPPDQQRLIFAGKQLEDGRTLSDYNIQKESTLHLVLRLRGGDI</sequence>
<dbReference type="EMBL" id="M23433">
    <property type="protein sequence ID" value="AAA28154.1"/>
    <property type="molecule type" value="Genomic_DNA"/>
</dbReference>
<dbReference type="EMBL" id="FO081045">
    <property type="protein sequence ID" value="CCD68779.1"/>
    <property type="molecule type" value="Genomic_DNA"/>
</dbReference>
<dbReference type="EMBL" id="M21321">
    <property type="protein sequence ID" value="AAA28153.1"/>
    <property type="molecule type" value="Genomic_DNA"/>
</dbReference>
<dbReference type="PIR" id="A30126">
    <property type="entry name" value="A30126"/>
</dbReference>
<dbReference type="PIR" id="T16144">
    <property type="entry name" value="T16144"/>
</dbReference>
<dbReference type="RefSeq" id="NP_741157.1">
    <property type="nucleotide sequence ID" value="NM_171139.8"/>
</dbReference>
<dbReference type="SMR" id="P0CG71"/>
<dbReference type="BioGRID" id="41061">
    <property type="interactions" value="21"/>
</dbReference>
<dbReference type="FunCoup" id="P0CG71">
    <property type="interactions" value="1823"/>
</dbReference>
<dbReference type="IntAct" id="P0CG71">
    <property type="interactions" value="1"/>
</dbReference>
<dbReference type="STRING" id="6239.F25B5.4a.2"/>
<dbReference type="PaxDb" id="6239-F25B5.4a.2"/>
<dbReference type="EnsemblMetazoa" id="F25B5.4.1">
    <property type="protein sequence ID" value="F25B5.4.1"/>
    <property type="gene ID" value="WBGene00006727"/>
</dbReference>
<dbReference type="EnsemblMetazoa" id="F25B5.4.2">
    <property type="protein sequence ID" value="F25B5.4.2"/>
    <property type="gene ID" value="WBGene00006727"/>
</dbReference>
<dbReference type="GeneID" id="175840"/>
<dbReference type="KEGG" id="cel:CELE_F25B5.4"/>
<dbReference type="AGR" id="WB:WBGene00006727"/>
<dbReference type="CTD" id="175840"/>
<dbReference type="WormBase" id="F25B5.4">
    <property type="protein sequence ID" value="CE01921"/>
    <property type="gene ID" value="WBGene00006727"/>
    <property type="gene designation" value="ubq-1"/>
</dbReference>
<dbReference type="eggNOG" id="KOG0001">
    <property type="taxonomic scope" value="Eukaryota"/>
</dbReference>
<dbReference type="GeneTree" id="ENSGT00940000163900"/>
<dbReference type="HOGENOM" id="CLU_010412_1_0_1"/>
<dbReference type="InParanoid" id="P0CG71"/>
<dbReference type="OMA" id="AYNIQEE"/>
<dbReference type="OrthoDB" id="428577at2759"/>
<dbReference type="PhylomeDB" id="P0CG71"/>
<dbReference type="Reactome" id="R-CEL-110312">
    <property type="pathway name" value="Translesion synthesis by REV1"/>
</dbReference>
<dbReference type="Reactome" id="R-CEL-110314">
    <property type="pathway name" value="Recognition of DNA damage by PCNA-containing replication complex"/>
</dbReference>
<dbReference type="Reactome" id="R-CEL-110320">
    <property type="pathway name" value="Translesion Synthesis by POLH"/>
</dbReference>
<dbReference type="Reactome" id="R-CEL-1169408">
    <property type="pathway name" value="ISG15 antiviral mechanism"/>
</dbReference>
<dbReference type="Reactome" id="R-CEL-1234176">
    <property type="pathway name" value="Oxygen-dependent proline hydroxylation of Hypoxia-inducible Factor Alpha"/>
</dbReference>
<dbReference type="Reactome" id="R-CEL-1253288">
    <property type="pathway name" value="Downregulation of ERBB4 signaling"/>
</dbReference>
<dbReference type="Reactome" id="R-CEL-182971">
    <property type="pathway name" value="EGFR downregulation"/>
</dbReference>
<dbReference type="Reactome" id="R-CEL-187577">
    <property type="pathway name" value="SCF(Skp2)-mediated degradation of p27/p21"/>
</dbReference>
<dbReference type="Reactome" id="R-CEL-195253">
    <property type="pathway name" value="Degradation of beta-catenin by the destruction complex"/>
</dbReference>
<dbReference type="Reactome" id="R-CEL-2173788">
    <property type="pathway name" value="Downregulation of TGF-beta receptor signaling"/>
</dbReference>
<dbReference type="Reactome" id="R-CEL-2173791">
    <property type="pathway name" value="TGF-beta receptor signaling in EMT (epithelial to mesenchymal transition)"/>
</dbReference>
<dbReference type="Reactome" id="R-CEL-2173795">
    <property type="pathway name" value="Downregulation of SMAD2/3:SMAD4 transcriptional activity"/>
</dbReference>
<dbReference type="Reactome" id="R-CEL-2173796">
    <property type="pathway name" value="SMAD2/SMAD3:SMAD4 heterotrimer regulates transcription"/>
</dbReference>
<dbReference type="Reactome" id="R-CEL-2565942">
    <property type="pathway name" value="Regulation of PLK1 Activity at G2/M Transition"/>
</dbReference>
<dbReference type="Reactome" id="R-CEL-2672351">
    <property type="pathway name" value="Stimuli-sensing channels"/>
</dbReference>
<dbReference type="Reactome" id="R-CEL-3134975">
    <property type="pathway name" value="Regulation of innate immune responses to cytosolic DNA"/>
</dbReference>
<dbReference type="Reactome" id="R-CEL-349425">
    <property type="pathway name" value="Autodegradation of the E3 ubiquitin ligase COP1"/>
</dbReference>
<dbReference type="Reactome" id="R-CEL-382556">
    <property type="pathway name" value="ABC-family proteins mediated transport"/>
</dbReference>
<dbReference type="Reactome" id="R-CEL-4641258">
    <property type="pathway name" value="Degradation of DVL"/>
</dbReference>
<dbReference type="Reactome" id="R-CEL-4641263">
    <property type="pathway name" value="Regulation of FZD by ubiquitination"/>
</dbReference>
<dbReference type="Reactome" id="R-CEL-532668">
    <property type="pathway name" value="N-glycan trimming in the ER and Calnexin/Calreticulin cycle"/>
</dbReference>
<dbReference type="Reactome" id="R-CEL-5357905">
    <property type="pathway name" value="Regulation of TNFR1 signaling"/>
</dbReference>
<dbReference type="Reactome" id="R-CEL-5358346">
    <property type="pathway name" value="Hedgehog ligand biogenesis"/>
</dbReference>
<dbReference type="Reactome" id="R-CEL-5632684">
    <property type="pathway name" value="Hedgehog 'on' state"/>
</dbReference>
<dbReference type="Reactome" id="R-CEL-5655862">
    <property type="pathway name" value="Translesion synthesis by POLK"/>
</dbReference>
<dbReference type="Reactome" id="R-CEL-5656121">
    <property type="pathway name" value="Translesion synthesis by POLI"/>
</dbReference>
<dbReference type="Reactome" id="R-CEL-5675221">
    <property type="pathway name" value="Negative regulation of MAPK pathway"/>
</dbReference>
<dbReference type="Reactome" id="R-CEL-5687128">
    <property type="pathway name" value="MAPK6/MAPK4 signaling"/>
</dbReference>
<dbReference type="Reactome" id="R-CEL-5689603">
    <property type="pathway name" value="UCH proteinases"/>
</dbReference>
<dbReference type="Reactome" id="R-CEL-5689877">
    <property type="pathway name" value="Josephin domain DUBs"/>
</dbReference>
<dbReference type="Reactome" id="R-CEL-5689880">
    <property type="pathway name" value="Ub-specific processing proteases"/>
</dbReference>
<dbReference type="Reactome" id="R-CEL-5689896">
    <property type="pathway name" value="Ovarian tumor domain proteases"/>
</dbReference>
<dbReference type="Reactome" id="R-CEL-5689901">
    <property type="pathway name" value="Metalloprotease DUBs"/>
</dbReference>
<dbReference type="Reactome" id="R-CEL-5696394">
    <property type="pathway name" value="DNA Damage Recognition in GG-NER"/>
</dbReference>
<dbReference type="Reactome" id="R-CEL-5696395">
    <property type="pathway name" value="Formation of Incision Complex in GG-NER"/>
</dbReference>
<dbReference type="Reactome" id="R-CEL-5696397">
    <property type="pathway name" value="Gap-filling DNA repair synthesis and ligation in GG-NER"/>
</dbReference>
<dbReference type="Reactome" id="R-CEL-5696400">
    <property type="pathway name" value="Dual Incision in GG-NER"/>
</dbReference>
<dbReference type="Reactome" id="R-CEL-6781823">
    <property type="pathway name" value="Formation of TC-NER Pre-Incision Complex"/>
</dbReference>
<dbReference type="Reactome" id="R-CEL-6782135">
    <property type="pathway name" value="Dual incision in TC-NER"/>
</dbReference>
<dbReference type="Reactome" id="R-CEL-6782210">
    <property type="pathway name" value="Gap-filling DNA repair synthesis and ligation in TC-NER"/>
</dbReference>
<dbReference type="Reactome" id="R-CEL-6807004">
    <property type="pathway name" value="Negative regulation of MET activity"/>
</dbReference>
<dbReference type="Reactome" id="R-CEL-68949">
    <property type="pathway name" value="Orc1 removal from chromatin"/>
</dbReference>
<dbReference type="Reactome" id="R-CEL-69017">
    <property type="pathway name" value="CDK-mediated phosphorylation and removal of Cdc6"/>
</dbReference>
<dbReference type="Reactome" id="R-CEL-69231">
    <property type="pathway name" value="Cyclin D associated events in G1"/>
</dbReference>
<dbReference type="Reactome" id="R-CEL-69601">
    <property type="pathway name" value="Ubiquitin Mediated Degradation of Phosphorylated Cdc25A"/>
</dbReference>
<dbReference type="Reactome" id="R-CEL-75815">
    <property type="pathway name" value="Ubiquitin-dependent degradation of Cyclin D"/>
</dbReference>
<dbReference type="Reactome" id="R-CEL-8849469">
    <property type="pathway name" value="PTK6 Regulates RTKs and Their Effectors AKT1 and DOK1"/>
</dbReference>
<dbReference type="Reactome" id="R-CEL-8854050">
    <property type="pathway name" value="FBXL7 down-regulates AURKA during mitotic entry and in early mitosis"/>
</dbReference>
<dbReference type="Reactome" id="R-CEL-8856825">
    <property type="pathway name" value="Cargo recognition for clathrin-mediated endocytosis"/>
</dbReference>
<dbReference type="Reactome" id="R-CEL-8856828">
    <property type="pathway name" value="Clathrin-mediated endocytosis"/>
</dbReference>
<dbReference type="Reactome" id="R-CEL-8863795">
    <property type="pathway name" value="Downregulation of ERBB2 signaling"/>
</dbReference>
<dbReference type="Reactome" id="R-CEL-8866652">
    <property type="pathway name" value="Synthesis of active ubiquitin: roles of E1 and E2 enzymes"/>
</dbReference>
<dbReference type="Reactome" id="R-CEL-8866654">
    <property type="pathway name" value="E3 ubiquitin ligases ubiquitinate target proteins"/>
</dbReference>
<dbReference type="Reactome" id="R-CEL-8939902">
    <property type="pathway name" value="Regulation of RUNX2 expression and activity"/>
</dbReference>
<dbReference type="Reactome" id="R-CEL-8941858">
    <property type="pathway name" value="Regulation of RUNX3 expression and activity"/>
</dbReference>
<dbReference type="Reactome" id="R-CEL-8948747">
    <property type="pathway name" value="Regulation of PTEN localization"/>
</dbReference>
<dbReference type="Reactome" id="R-CEL-8948751">
    <property type="pathway name" value="Regulation of PTEN stability and activity"/>
</dbReference>
<dbReference type="Reactome" id="R-CEL-8951664">
    <property type="pathway name" value="Neddylation"/>
</dbReference>
<dbReference type="Reactome" id="R-CEL-901032">
    <property type="pathway name" value="ER Quality Control Compartment (ERQC)"/>
</dbReference>
<dbReference type="Reactome" id="R-CEL-9020702">
    <property type="pathway name" value="Interleukin-1 signaling"/>
</dbReference>
<dbReference type="Reactome" id="R-CEL-9033241">
    <property type="pathway name" value="Peroxisomal protein import"/>
</dbReference>
<dbReference type="Reactome" id="R-CEL-912631">
    <property type="pathway name" value="Regulation of signaling by CBL"/>
</dbReference>
<dbReference type="Reactome" id="R-CEL-917729">
    <property type="pathway name" value="Endosomal Sorting Complex Required For Transport (ESCRT)"/>
</dbReference>
<dbReference type="Reactome" id="R-CEL-917937">
    <property type="pathway name" value="Iron uptake and transport"/>
</dbReference>
<dbReference type="Reactome" id="R-CEL-936440">
    <property type="pathway name" value="Negative regulators of DDX58/IFIH1 signaling"/>
</dbReference>
<dbReference type="Reactome" id="R-CEL-9646399">
    <property type="pathway name" value="Aggrephagy"/>
</dbReference>
<dbReference type="Reactome" id="R-CEL-9648002">
    <property type="pathway name" value="RAS processing"/>
</dbReference>
<dbReference type="Reactome" id="R-CEL-9755511">
    <property type="pathway name" value="KEAP1-NFE2L2 pathway"/>
</dbReference>
<dbReference type="Reactome" id="R-CEL-9762114">
    <property type="pathway name" value="GSK3B and BTRC:CUL1-mediated-degradation of NFE2L2"/>
</dbReference>
<dbReference type="Reactome" id="R-CEL-983168">
    <property type="pathway name" value="Antigen processing: Ubiquitination &amp; Proteasome degradation"/>
</dbReference>
<dbReference type="Reactome" id="R-CEL-9833482">
    <property type="pathway name" value="PKR-mediated signaling"/>
</dbReference>
<dbReference type="Reactome" id="R-CEL-9909505">
    <property type="pathway name" value="Modulation of host responses by IFN-stimulated genes"/>
</dbReference>
<dbReference type="SignaLink" id="P0CG71"/>
<dbReference type="PRO" id="PR:P0CG71"/>
<dbReference type="Proteomes" id="UP000001940">
    <property type="component" value="Chromosome III"/>
</dbReference>
<dbReference type="Bgee" id="WBGene00006727">
    <property type="expression patterns" value="Expressed in germ line (C elegans) and 4 other cell types or tissues"/>
</dbReference>
<dbReference type="GO" id="GO:0005737">
    <property type="term" value="C:cytoplasm"/>
    <property type="evidence" value="ECO:0000318"/>
    <property type="project" value="GO_Central"/>
</dbReference>
<dbReference type="GO" id="GO:0005634">
    <property type="term" value="C:nucleus"/>
    <property type="evidence" value="ECO:0000318"/>
    <property type="project" value="GO_Central"/>
</dbReference>
<dbReference type="GO" id="GO:0031386">
    <property type="term" value="F:protein tag activity"/>
    <property type="evidence" value="ECO:0000318"/>
    <property type="project" value="GO_Central"/>
</dbReference>
<dbReference type="GO" id="GO:0031625">
    <property type="term" value="F:ubiquitin protein ligase binding"/>
    <property type="evidence" value="ECO:0000318"/>
    <property type="project" value="GO_Central"/>
</dbReference>
<dbReference type="GO" id="GO:0019941">
    <property type="term" value="P:modification-dependent protein catabolic process"/>
    <property type="evidence" value="ECO:0000318"/>
    <property type="project" value="GO_Central"/>
</dbReference>
<dbReference type="GO" id="GO:0010623">
    <property type="term" value="P:programmed cell death involved in cell development"/>
    <property type="evidence" value="ECO:0000315"/>
    <property type="project" value="UniProtKB"/>
</dbReference>
<dbReference type="GO" id="GO:0016567">
    <property type="term" value="P:protein ubiquitination"/>
    <property type="evidence" value="ECO:0000318"/>
    <property type="project" value="GO_Central"/>
</dbReference>
<dbReference type="GO" id="GO:0006511">
    <property type="term" value="P:ubiquitin-dependent protein catabolic process"/>
    <property type="evidence" value="ECO:0000315"/>
    <property type="project" value="UniProtKB"/>
</dbReference>
<dbReference type="CDD" id="cd01803">
    <property type="entry name" value="Ubl_ubiquitin"/>
    <property type="match status" value="11"/>
</dbReference>
<dbReference type="FunFam" id="3.10.20.90:FF:000158">
    <property type="entry name" value="Polyubiquitin 5"/>
    <property type="match status" value="3"/>
</dbReference>
<dbReference type="FunFam" id="3.10.20.90:FF:000001">
    <property type="entry name" value="Probable polyubiquitin"/>
    <property type="match status" value="1"/>
</dbReference>
<dbReference type="FunFam" id="3.10.20.90:FF:000014">
    <property type="entry name" value="Ubiquitin-60S ribosomal L40 fusion"/>
    <property type="match status" value="7"/>
</dbReference>
<dbReference type="Gene3D" id="3.10.20.90">
    <property type="entry name" value="Phosphatidylinositol 3-kinase Catalytic Subunit, Chain A, domain 1"/>
    <property type="match status" value="11"/>
</dbReference>
<dbReference type="InterPro" id="IPR000626">
    <property type="entry name" value="Ubiquitin-like_dom"/>
</dbReference>
<dbReference type="InterPro" id="IPR029071">
    <property type="entry name" value="Ubiquitin-like_domsf"/>
</dbReference>
<dbReference type="InterPro" id="IPR019954">
    <property type="entry name" value="Ubiquitin_CS"/>
</dbReference>
<dbReference type="InterPro" id="IPR019956">
    <property type="entry name" value="Ubiquitin_dom"/>
</dbReference>
<dbReference type="InterPro" id="IPR050158">
    <property type="entry name" value="Ubiquitin_ubiquitin-like"/>
</dbReference>
<dbReference type="PANTHER" id="PTHR10666">
    <property type="entry name" value="UBIQUITIN"/>
    <property type="match status" value="1"/>
</dbReference>
<dbReference type="Pfam" id="PF00240">
    <property type="entry name" value="ubiquitin"/>
    <property type="match status" value="11"/>
</dbReference>
<dbReference type="PRINTS" id="PR00348">
    <property type="entry name" value="UBIQUITIN"/>
</dbReference>
<dbReference type="SMART" id="SM00213">
    <property type="entry name" value="UBQ"/>
    <property type="match status" value="11"/>
</dbReference>
<dbReference type="SUPFAM" id="SSF54236">
    <property type="entry name" value="Ubiquitin-like"/>
    <property type="match status" value="11"/>
</dbReference>
<dbReference type="PROSITE" id="PS00299">
    <property type="entry name" value="UBIQUITIN_1"/>
    <property type="match status" value="11"/>
</dbReference>
<dbReference type="PROSITE" id="PS50053">
    <property type="entry name" value="UBIQUITIN_2"/>
    <property type="match status" value="11"/>
</dbReference>
<protein>
    <recommendedName>
        <fullName>Polyubiquitin-A</fullName>
    </recommendedName>
    <component>
        <recommendedName>
            <fullName>Ubiquitin</fullName>
        </recommendedName>
    </component>
    <component>
        <recommendedName>
            <fullName>Ubiquitin-related</fullName>
        </recommendedName>
    </component>
</protein>
<feature type="chain" id="PRO_0000114817" description="Ubiquitin">
    <location>
        <begin position="1"/>
        <end position="76"/>
    </location>
</feature>
<feature type="chain" id="PRO_0000396270" description="Ubiquitin">
    <location>
        <begin position="77"/>
        <end position="152"/>
    </location>
</feature>
<feature type="chain" id="PRO_0000396271" description="Ubiquitin">
    <location>
        <begin position="153"/>
        <end position="228"/>
    </location>
</feature>
<feature type="chain" id="PRO_0000396272" description="Ubiquitin">
    <location>
        <begin position="229"/>
        <end position="304"/>
    </location>
</feature>
<feature type="chain" id="PRO_0000396273" description="Ubiquitin">
    <location>
        <begin position="305"/>
        <end position="380"/>
    </location>
</feature>
<feature type="chain" id="PRO_0000396274" description="Ubiquitin-related">
    <location>
        <begin position="381"/>
        <end position="456"/>
    </location>
</feature>
<feature type="chain" id="PRO_0000396275" description="Ubiquitin">
    <location>
        <begin position="457"/>
        <end position="532"/>
    </location>
</feature>
<feature type="chain" id="PRO_0000396276" description="Ubiquitin">
    <location>
        <begin position="533"/>
        <end position="608"/>
    </location>
</feature>
<feature type="chain" id="PRO_0000396277" description="Ubiquitin">
    <location>
        <begin position="609"/>
        <end position="684"/>
    </location>
</feature>
<feature type="chain" id="PRO_0000396278" description="Ubiquitin">
    <location>
        <begin position="685"/>
        <end position="760"/>
    </location>
</feature>
<feature type="chain" id="PRO_0000396279" description="Ubiquitin">
    <location>
        <begin position="761"/>
        <end position="836"/>
    </location>
</feature>
<feature type="propeptide" id="PRO_0000396280">
    <location>
        <begin position="837"/>
        <end position="838"/>
    </location>
</feature>
<feature type="domain" description="Ubiquitin-like 1" evidence="2">
    <location>
        <begin position="1"/>
        <end position="76"/>
    </location>
</feature>
<feature type="domain" description="Ubiquitin-like 2" evidence="2">
    <location>
        <begin position="77"/>
        <end position="152"/>
    </location>
</feature>
<feature type="domain" description="Ubiquitin-like 3" evidence="2">
    <location>
        <begin position="153"/>
        <end position="228"/>
    </location>
</feature>
<feature type="domain" description="Ubiquitin-like 4" evidence="2">
    <location>
        <begin position="229"/>
        <end position="304"/>
    </location>
</feature>
<feature type="domain" description="Ubiquitin-like 5" evidence="2">
    <location>
        <begin position="305"/>
        <end position="380"/>
    </location>
</feature>
<feature type="domain" description="Ubiquitin-like 6" evidence="2">
    <location>
        <begin position="381"/>
        <end position="456"/>
    </location>
</feature>
<feature type="domain" description="Ubiquitin-like 7" evidence="2">
    <location>
        <begin position="457"/>
        <end position="532"/>
    </location>
</feature>
<feature type="domain" description="Ubiquitin-like 8" evidence="2">
    <location>
        <begin position="533"/>
        <end position="608"/>
    </location>
</feature>
<feature type="domain" description="Ubiquitin-like 9" evidence="2">
    <location>
        <begin position="609"/>
        <end position="684"/>
    </location>
</feature>
<feature type="domain" description="Ubiquitin-like 10" evidence="2">
    <location>
        <begin position="685"/>
        <end position="760"/>
    </location>
</feature>
<feature type="domain" description="Ubiquitin-like 11" evidence="2">
    <location>
        <begin position="761"/>
        <end position="836"/>
    </location>
</feature>
<feature type="cross-link" description="Glycyl lysine isopeptide (Lys-Gly) (interchain with G-Cter in ubiquitin)" evidence="1">
    <location>
        <position position="48"/>
    </location>
</feature>
<feature type="cross-link" description="Glycyl lysine isopeptide (Gly-Lys) (interchain with K-? in acceptor proteins)" evidence="2">
    <location>
        <position position="76"/>
    </location>
</feature>